<evidence type="ECO:0000255" key="1">
    <source>
        <dbReference type="HAMAP-Rule" id="MF_00368"/>
    </source>
</evidence>
<evidence type="ECO:0000305" key="2"/>
<accession>Q5L5I2</accession>
<dbReference type="EMBL" id="CR848038">
    <property type="protein sequence ID" value="CAH64109.1"/>
    <property type="molecule type" value="Genomic_DNA"/>
</dbReference>
<dbReference type="SMR" id="Q5L5I2"/>
<dbReference type="KEGG" id="cab:CAB662"/>
<dbReference type="eggNOG" id="COG0222">
    <property type="taxonomic scope" value="Bacteria"/>
</dbReference>
<dbReference type="HOGENOM" id="CLU_086499_3_0_0"/>
<dbReference type="Proteomes" id="UP000001012">
    <property type="component" value="Chromosome"/>
</dbReference>
<dbReference type="GO" id="GO:0022625">
    <property type="term" value="C:cytosolic large ribosomal subunit"/>
    <property type="evidence" value="ECO:0007669"/>
    <property type="project" value="TreeGrafter"/>
</dbReference>
<dbReference type="GO" id="GO:0003729">
    <property type="term" value="F:mRNA binding"/>
    <property type="evidence" value="ECO:0007669"/>
    <property type="project" value="TreeGrafter"/>
</dbReference>
<dbReference type="GO" id="GO:0003735">
    <property type="term" value="F:structural constituent of ribosome"/>
    <property type="evidence" value="ECO:0007669"/>
    <property type="project" value="InterPro"/>
</dbReference>
<dbReference type="GO" id="GO:0006412">
    <property type="term" value="P:translation"/>
    <property type="evidence" value="ECO:0007669"/>
    <property type="project" value="UniProtKB-UniRule"/>
</dbReference>
<dbReference type="CDD" id="cd00387">
    <property type="entry name" value="Ribosomal_L7_L12"/>
    <property type="match status" value="1"/>
</dbReference>
<dbReference type="FunFam" id="3.30.1390.10:FF:000001">
    <property type="entry name" value="50S ribosomal protein L7/L12"/>
    <property type="match status" value="1"/>
</dbReference>
<dbReference type="Gene3D" id="3.30.1390.10">
    <property type="match status" value="1"/>
</dbReference>
<dbReference type="Gene3D" id="1.20.5.710">
    <property type="entry name" value="Single helix bin"/>
    <property type="match status" value="1"/>
</dbReference>
<dbReference type="HAMAP" id="MF_00368">
    <property type="entry name" value="Ribosomal_bL12"/>
    <property type="match status" value="1"/>
</dbReference>
<dbReference type="InterPro" id="IPR000206">
    <property type="entry name" value="Ribosomal_bL12"/>
</dbReference>
<dbReference type="InterPro" id="IPR013823">
    <property type="entry name" value="Ribosomal_bL12_C"/>
</dbReference>
<dbReference type="InterPro" id="IPR014719">
    <property type="entry name" value="Ribosomal_bL12_C/ClpS-like"/>
</dbReference>
<dbReference type="InterPro" id="IPR008932">
    <property type="entry name" value="Ribosomal_bL12_oligo"/>
</dbReference>
<dbReference type="InterPro" id="IPR036235">
    <property type="entry name" value="Ribosomal_bL12_oligo_N_sf"/>
</dbReference>
<dbReference type="NCBIfam" id="TIGR00855">
    <property type="entry name" value="L12"/>
    <property type="match status" value="1"/>
</dbReference>
<dbReference type="PANTHER" id="PTHR45987">
    <property type="entry name" value="39S RIBOSOMAL PROTEIN L12"/>
    <property type="match status" value="1"/>
</dbReference>
<dbReference type="PANTHER" id="PTHR45987:SF4">
    <property type="entry name" value="LARGE RIBOSOMAL SUBUNIT PROTEIN BL12M"/>
    <property type="match status" value="1"/>
</dbReference>
<dbReference type="Pfam" id="PF00542">
    <property type="entry name" value="Ribosomal_L12"/>
    <property type="match status" value="1"/>
</dbReference>
<dbReference type="Pfam" id="PF16320">
    <property type="entry name" value="Ribosomal_L12_N"/>
    <property type="match status" value="1"/>
</dbReference>
<dbReference type="SUPFAM" id="SSF54736">
    <property type="entry name" value="ClpS-like"/>
    <property type="match status" value="1"/>
</dbReference>
<dbReference type="SUPFAM" id="SSF48300">
    <property type="entry name" value="Ribosomal protein L7/12, oligomerisation (N-terminal) domain"/>
    <property type="match status" value="1"/>
</dbReference>
<reference key="1">
    <citation type="journal article" date="2005" name="Genome Res.">
        <title>The Chlamydophila abortus genome sequence reveals an array of variable proteins that contribute to interspecies variation.</title>
        <authorList>
            <person name="Thomson N.R."/>
            <person name="Yeats C."/>
            <person name="Bell K."/>
            <person name="Holden M.T.G."/>
            <person name="Bentley S.D."/>
            <person name="Livingstone M."/>
            <person name="Cerdeno-Tarraga A.-M."/>
            <person name="Harris B."/>
            <person name="Doggett J."/>
            <person name="Ormond D."/>
            <person name="Mungall K."/>
            <person name="Clarke K."/>
            <person name="Feltwell T."/>
            <person name="Hance Z."/>
            <person name="Sanders M."/>
            <person name="Quail M.A."/>
            <person name="Price C."/>
            <person name="Barrell B.G."/>
            <person name="Parkhill J."/>
            <person name="Longbottom D."/>
        </authorList>
    </citation>
    <scope>NUCLEOTIDE SEQUENCE [LARGE SCALE GENOMIC DNA]</scope>
    <source>
        <strain>DSM 27085 / S26/3</strain>
    </source>
</reference>
<name>RL7_CHLAB</name>
<protein>
    <recommendedName>
        <fullName evidence="1">Large ribosomal subunit protein bL12</fullName>
    </recommendedName>
    <alternativeName>
        <fullName evidence="2">50S ribosomal protein L7/L12</fullName>
    </alternativeName>
</protein>
<gene>
    <name evidence="1" type="primary">rplL</name>
    <name type="ordered locus">CAB662</name>
</gene>
<comment type="function">
    <text evidence="1">Forms part of the ribosomal stalk which helps the ribosome interact with GTP-bound translation factors. Is thus essential for accurate translation.</text>
</comment>
<comment type="subunit">
    <text evidence="1">Homodimer. Part of the ribosomal stalk of the 50S ribosomal subunit. Forms a multimeric L10(L12)X complex, where L10 forms an elongated spine to which 2 to 4 L12 dimers bind in a sequential fashion. Binds GTP-bound translation factors.</text>
</comment>
<comment type="similarity">
    <text evidence="1">Belongs to the bacterial ribosomal protein bL12 family.</text>
</comment>
<organism>
    <name type="scientific">Chlamydia abortus (strain DSM 27085 / S26/3)</name>
    <name type="common">Chlamydophila abortus</name>
    <dbReference type="NCBI Taxonomy" id="218497"/>
    <lineage>
        <taxon>Bacteria</taxon>
        <taxon>Pseudomonadati</taxon>
        <taxon>Chlamydiota</taxon>
        <taxon>Chlamydiia</taxon>
        <taxon>Chlamydiales</taxon>
        <taxon>Chlamydiaceae</taxon>
        <taxon>Chlamydia/Chlamydophila group</taxon>
        <taxon>Chlamydia</taxon>
    </lineage>
</organism>
<keyword id="KW-0687">Ribonucleoprotein</keyword>
<keyword id="KW-0689">Ribosomal protein</keyword>
<sequence>MTKVTTQSLETLVETLSSLTVLELSALKKLLEEKWDVTAAAPVMAVAAGAAGAGAEAAPAESTEFAVTLEEVPADKKIGVLKVVREVTGLALKEAKEMTEGLPKVVKEKTSKSDAEETVKKLQEAGAKASFKGL</sequence>
<proteinExistence type="inferred from homology"/>
<feature type="chain" id="PRO_0000243408" description="Large ribosomal subunit protein bL12">
    <location>
        <begin position="1"/>
        <end position="134"/>
    </location>
</feature>